<keyword id="KW-0963">Cytoplasm</keyword>
<keyword id="KW-0396">Initiation factor</keyword>
<keyword id="KW-0648">Protein biosynthesis</keyword>
<keyword id="KW-1185">Reference proteome</keyword>
<reference key="1">
    <citation type="journal article" date="2007" name="Science">
        <title>Sea anemone genome reveals ancestral eumetazoan gene repertoire and genomic organization.</title>
        <authorList>
            <person name="Putnam N.H."/>
            <person name="Srivastava M."/>
            <person name="Hellsten U."/>
            <person name="Dirks B."/>
            <person name="Chapman J."/>
            <person name="Salamov A."/>
            <person name="Terry A."/>
            <person name="Shapiro H."/>
            <person name="Lindquist E."/>
            <person name="Kapitonov V.V."/>
            <person name="Jurka J."/>
            <person name="Genikhovich G."/>
            <person name="Grigoriev I.V."/>
            <person name="Lucas S.M."/>
            <person name="Steele R.E."/>
            <person name="Finnerty J.R."/>
            <person name="Technau U."/>
            <person name="Martindale M.Q."/>
            <person name="Rokhsar D.S."/>
        </authorList>
    </citation>
    <scope>NUCLEOTIDE SEQUENCE [LARGE SCALE GENOMIC DNA]</scope>
    <source>
        <strain>CH2 X CH6</strain>
    </source>
</reference>
<comment type="function">
    <text evidence="1">Component of the eukaryotic translation initiation factor 3 (eIF-3) complex, which is involved in protein synthesis of a specialized repertoire of mRNAs and, together with other initiation factors, stimulates binding of mRNA and methionyl-tRNAi to the 40S ribosome. The eIF-3 complex specifically targets and initiates translation of a subset of mRNAs involved in cell proliferation.</text>
</comment>
<comment type="subunit">
    <text evidence="1">Component of the eukaryotic translation initiation factor 3 (eIF-3) complex.</text>
</comment>
<comment type="subcellular location">
    <subcellularLocation>
        <location evidence="1">Cytoplasm</location>
    </subcellularLocation>
</comment>
<comment type="similarity">
    <text evidence="1">Belongs to the eIF-3 subunit M family.</text>
</comment>
<name>EIF3M_NEMVE</name>
<sequence>MDTLLPAFIDAEEQEQAQEIRTFLKEQGADLKEESITPLQDELAEILECCQVCFKEDAELESVMNSILSLVLVVPEKRNELIKKCCDKLKANMSEDENSSAAARLRVLSVLFSGLPEKDPMRHEVYCTQLTIAAKASLVDDIPTELELVKGWLGLWDVDADQRRQVFRLLHGALHDEKRSEEASKVMIELLSTYTDENASAAREDAKSCVVSCLTKPNVLIMDNILSLKPVAVLQGDPIYQLLQIFVSGDVQDYKKFYDSNTDFINSIGLSHEMNLKKMRVLTLMSIGKETDEISYEDLATKLGISSDEIEQFLIEAIQTGLVKARLDQVHRKVIISSVAQRTFGINQWQNLHSRLVKWRDNLLSVRGGLQSVVPPITV</sequence>
<proteinExistence type="inferred from homology"/>
<evidence type="ECO:0000255" key="1">
    <source>
        <dbReference type="HAMAP-Rule" id="MF_03012"/>
    </source>
</evidence>
<evidence type="ECO:0000255" key="2">
    <source>
        <dbReference type="PROSITE-ProRule" id="PRU01185"/>
    </source>
</evidence>
<dbReference type="EMBL" id="DS469738">
    <property type="protein sequence ID" value="EDO34250.1"/>
    <property type="molecule type" value="Genomic_DNA"/>
</dbReference>
<dbReference type="SMR" id="A7SPX9"/>
<dbReference type="FunCoup" id="A7SPX9">
    <property type="interactions" value="909"/>
</dbReference>
<dbReference type="STRING" id="45351.A7SPX9"/>
<dbReference type="EnsemblMetazoa" id="EDO34250">
    <property type="protein sequence ID" value="EDO34250"/>
    <property type="gene ID" value="NEMVEDRAFT_v1g192238"/>
</dbReference>
<dbReference type="KEGG" id="nve:5505599"/>
<dbReference type="eggNOG" id="KOG2753">
    <property type="taxonomic scope" value="Eukaryota"/>
</dbReference>
<dbReference type="HOGENOM" id="CLU_035254_1_0_1"/>
<dbReference type="InParanoid" id="A7SPX9"/>
<dbReference type="OMA" id="VCLKALW"/>
<dbReference type="OrthoDB" id="10267031at2759"/>
<dbReference type="PhylomeDB" id="A7SPX9"/>
<dbReference type="Proteomes" id="UP000001593">
    <property type="component" value="Unassembled WGS sequence"/>
</dbReference>
<dbReference type="GO" id="GO:0016282">
    <property type="term" value="C:eukaryotic 43S preinitiation complex"/>
    <property type="evidence" value="ECO:0007669"/>
    <property type="project" value="UniProtKB-UniRule"/>
</dbReference>
<dbReference type="GO" id="GO:0033290">
    <property type="term" value="C:eukaryotic 48S preinitiation complex"/>
    <property type="evidence" value="ECO:0007669"/>
    <property type="project" value="UniProtKB-UniRule"/>
</dbReference>
<dbReference type="GO" id="GO:0005852">
    <property type="term" value="C:eukaryotic translation initiation factor 3 complex"/>
    <property type="evidence" value="ECO:0000318"/>
    <property type="project" value="GO_Central"/>
</dbReference>
<dbReference type="GO" id="GO:0071541">
    <property type="term" value="C:eukaryotic translation initiation factor 3 complex, eIF3m"/>
    <property type="evidence" value="ECO:0007669"/>
    <property type="project" value="UniProtKB-UniRule"/>
</dbReference>
<dbReference type="GO" id="GO:0003743">
    <property type="term" value="F:translation initiation factor activity"/>
    <property type="evidence" value="ECO:0007669"/>
    <property type="project" value="UniProtKB-UniRule"/>
</dbReference>
<dbReference type="GO" id="GO:0002183">
    <property type="term" value="P:cytoplasmic translational initiation"/>
    <property type="evidence" value="ECO:0000318"/>
    <property type="project" value="GO_Central"/>
</dbReference>
<dbReference type="GO" id="GO:0001732">
    <property type="term" value="P:formation of cytoplasmic translation initiation complex"/>
    <property type="evidence" value="ECO:0007669"/>
    <property type="project" value="UniProtKB-UniRule"/>
</dbReference>
<dbReference type="HAMAP" id="MF_03012">
    <property type="entry name" value="eIF3m"/>
    <property type="match status" value="1"/>
</dbReference>
<dbReference type="InterPro" id="IPR016024">
    <property type="entry name" value="ARM-type_fold"/>
</dbReference>
<dbReference type="InterPro" id="IPR045237">
    <property type="entry name" value="COPS7/eIF3m"/>
</dbReference>
<dbReference type="InterPro" id="IPR027528">
    <property type="entry name" value="eIF3m"/>
</dbReference>
<dbReference type="InterPro" id="IPR040750">
    <property type="entry name" value="eIF3m_C_helix"/>
</dbReference>
<dbReference type="InterPro" id="IPR000717">
    <property type="entry name" value="PCI_dom"/>
</dbReference>
<dbReference type="InterPro" id="IPR036390">
    <property type="entry name" value="WH_DNA-bd_sf"/>
</dbReference>
<dbReference type="PANTHER" id="PTHR15350">
    <property type="entry name" value="COP9 SIGNALOSOME COMPLEX SUBUNIT 7/DENDRITIC CELL PROTEIN GA17"/>
    <property type="match status" value="1"/>
</dbReference>
<dbReference type="PANTHER" id="PTHR15350:SF2">
    <property type="entry name" value="EUKARYOTIC TRANSLATION INITIATION FACTOR 3 SUBUNIT M"/>
    <property type="match status" value="1"/>
</dbReference>
<dbReference type="Pfam" id="PF18005">
    <property type="entry name" value="eIF3m_C_helix"/>
    <property type="match status" value="1"/>
</dbReference>
<dbReference type="Pfam" id="PF01399">
    <property type="entry name" value="PCI"/>
    <property type="match status" value="1"/>
</dbReference>
<dbReference type="SMART" id="SM00088">
    <property type="entry name" value="PINT"/>
    <property type="match status" value="1"/>
</dbReference>
<dbReference type="SUPFAM" id="SSF48371">
    <property type="entry name" value="ARM repeat"/>
    <property type="match status" value="1"/>
</dbReference>
<dbReference type="SUPFAM" id="SSF46785">
    <property type="entry name" value="Winged helix' DNA-binding domain"/>
    <property type="match status" value="1"/>
</dbReference>
<dbReference type="PROSITE" id="PS50250">
    <property type="entry name" value="PCI"/>
    <property type="match status" value="1"/>
</dbReference>
<feature type="chain" id="PRO_0000366009" description="Eukaryotic translation initiation factor 3 subunit M">
    <location>
        <begin position="1"/>
        <end position="379"/>
    </location>
</feature>
<feature type="domain" description="PCI" evidence="2">
    <location>
        <begin position="179"/>
        <end position="341"/>
    </location>
</feature>
<protein>
    <recommendedName>
        <fullName evidence="1">Eukaryotic translation initiation factor 3 subunit M</fullName>
        <shortName evidence="1">eIF3m</shortName>
    </recommendedName>
</protein>
<organism>
    <name type="scientific">Nematostella vectensis</name>
    <name type="common">Starlet sea anemone</name>
    <dbReference type="NCBI Taxonomy" id="45351"/>
    <lineage>
        <taxon>Eukaryota</taxon>
        <taxon>Metazoa</taxon>
        <taxon>Cnidaria</taxon>
        <taxon>Anthozoa</taxon>
        <taxon>Hexacorallia</taxon>
        <taxon>Actiniaria</taxon>
        <taxon>Edwardsiidae</taxon>
        <taxon>Nematostella</taxon>
    </lineage>
</organism>
<gene>
    <name type="ORF">v1g192238</name>
</gene>
<accession>A7SPX9</accession>